<comment type="function">
    <text evidence="1">Catalyzes the attachment of serine to tRNA(Ser). Is also able to aminoacylate tRNA(Sec) with serine, to form the misacylated tRNA L-seryl-tRNA(Sec), which will be further converted into selenocysteinyl-tRNA(Sec).</text>
</comment>
<comment type="catalytic activity">
    <reaction evidence="1">
        <text>tRNA(Ser) + L-serine + ATP = L-seryl-tRNA(Ser) + AMP + diphosphate + H(+)</text>
        <dbReference type="Rhea" id="RHEA:12292"/>
        <dbReference type="Rhea" id="RHEA-COMP:9669"/>
        <dbReference type="Rhea" id="RHEA-COMP:9703"/>
        <dbReference type="ChEBI" id="CHEBI:15378"/>
        <dbReference type="ChEBI" id="CHEBI:30616"/>
        <dbReference type="ChEBI" id="CHEBI:33019"/>
        <dbReference type="ChEBI" id="CHEBI:33384"/>
        <dbReference type="ChEBI" id="CHEBI:78442"/>
        <dbReference type="ChEBI" id="CHEBI:78533"/>
        <dbReference type="ChEBI" id="CHEBI:456215"/>
        <dbReference type="EC" id="6.1.1.11"/>
    </reaction>
</comment>
<comment type="catalytic activity">
    <reaction evidence="1">
        <text>tRNA(Sec) + L-serine + ATP = L-seryl-tRNA(Sec) + AMP + diphosphate + H(+)</text>
        <dbReference type="Rhea" id="RHEA:42580"/>
        <dbReference type="Rhea" id="RHEA-COMP:9742"/>
        <dbReference type="Rhea" id="RHEA-COMP:10128"/>
        <dbReference type="ChEBI" id="CHEBI:15378"/>
        <dbReference type="ChEBI" id="CHEBI:30616"/>
        <dbReference type="ChEBI" id="CHEBI:33019"/>
        <dbReference type="ChEBI" id="CHEBI:33384"/>
        <dbReference type="ChEBI" id="CHEBI:78442"/>
        <dbReference type="ChEBI" id="CHEBI:78533"/>
        <dbReference type="ChEBI" id="CHEBI:456215"/>
        <dbReference type="EC" id="6.1.1.11"/>
    </reaction>
</comment>
<comment type="pathway">
    <text evidence="1">Aminoacyl-tRNA biosynthesis; selenocysteinyl-tRNA(Sec) biosynthesis; L-seryl-tRNA(Sec) from L-serine and tRNA(Sec): step 1/1.</text>
</comment>
<comment type="subunit">
    <text evidence="1">Homodimer. The tRNA molecule binds across the dimer.</text>
</comment>
<comment type="subcellular location">
    <subcellularLocation>
        <location evidence="1">Cytoplasm</location>
    </subcellularLocation>
</comment>
<comment type="domain">
    <text evidence="1">Consists of two distinct domains, a catalytic core and a N-terminal extension that is involved in tRNA binding.</text>
</comment>
<comment type="similarity">
    <text evidence="1">Belongs to the class-II aminoacyl-tRNA synthetase family. Type-1 seryl-tRNA synthetase subfamily.</text>
</comment>
<feature type="chain" id="PRO_1000019756" description="Serine--tRNA ligase">
    <location>
        <begin position="1"/>
        <end position="430"/>
    </location>
</feature>
<feature type="region of interest" description="Disordered" evidence="2">
    <location>
        <begin position="47"/>
        <end position="66"/>
    </location>
</feature>
<feature type="binding site" evidence="1">
    <location>
        <begin position="231"/>
        <end position="233"/>
    </location>
    <ligand>
        <name>L-serine</name>
        <dbReference type="ChEBI" id="CHEBI:33384"/>
    </ligand>
</feature>
<feature type="binding site" evidence="1">
    <location>
        <begin position="262"/>
        <end position="264"/>
    </location>
    <ligand>
        <name>ATP</name>
        <dbReference type="ChEBI" id="CHEBI:30616"/>
    </ligand>
</feature>
<feature type="binding site" evidence="1">
    <location>
        <position position="285"/>
    </location>
    <ligand>
        <name>L-serine</name>
        <dbReference type="ChEBI" id="CHEBI:33384"/>
    </ligand>
</feature>
<feature type="binding site" evidence="1">
    <location>
        <begin position="349"/>
        <end position="352"/>
    </location>
    <ligand>
        <name>ATP</name>
        <dbReference type="ChEBI" id="CHEBI:30616"/>
    </ligand>
</feature>
<feature type="binding site" evidence="1">
    <location>
        <position position="385"/>
    </location>
    <ligand>
        <name>L-serine</name>
        <dbReference type="ChEBI" id="CHEBI:33384"/>
    </ligand>
</feature>
<organism>
    <name type="scientific">Paracoccus denitrificans (strain Pd 1222)</name>
    <dbReference type="NCBI Taxonomy" id="318586"/>
    <lineage>
        <taxon>Bacteria</taxon>
        <taxon>Pseudomonadati</taxon>
        <taxon>Pseudomonadota</taxon>
        <taxon>Alphaproteobacteria</taxon>
        <taxon>Rhodobacterales</taxon>
        <taxon>Paracoccaceae</taxon>
        <taxon>Paracoccus</taxon>
    </lineage>
</organism>
<gene>
    <name evidence="1" type="primary">serS</name>
    <name type="ordered locus">Pden_2429</name>
</gene>
<dbReference type="EC" id="6.1.1.11" evidence="1"/>
<dbReference type="EMBL" id="CP000489">
    <property type="protein sequence ID" value="ABL70516.1"/>
    <property type="molecule type" value="Genomic_DNA"/>
</dbReference>
<dbReference type="RefSeq" id="WP_011748709.1">
    <property type="nucleotide sequence ID" value="NC_008686.1"/>
</dbReference>
<dbReference type="SMR" id="A1B4S2"/>
<dbReference type="STRING" id="318586.Pden_2429"/>
<dbReference type="EnsemblBacteria" id="ABL70516">
    <property type="protein sequence ID" value="ABL70516"/>
    <property type="gene ID" value="Pden_2429"/>
</dbReference>
<dbReference type="GeneID" id="93450824"/>
<dbReference type="KEGG" id="pde:Pden_2429"/>
<dbReference type="eggNOG" id="COG0172">
    <property type="taxonomic scope" value="Bacteria"/>
</dbReference>
<dbReference type="HOGENOM" id="CLU_023797_1_1_5"/>
<dbReference type="OrthoDB" id="9804647at2"/>
<dbReference type="UniPathway" id="UPA00906">
    <property type="reaction ID" value="UER00895"/>
</dbReference>
<dbReference type="Proteomes" id="UP000000361">
    <property type="component" value="Chromosome 1"/>
</dbReference>
<dbReference type="GO" id="GO:0005737">
    <property type="term" value="C:cytoplasm"/>
    <property type="evidence" value="ECO:0007669"/>
    <property type="project" value="UniProtKB-SubCell"/>
</dbReference>
<dbReference type="GO" id="GO:0005524">
    <property type="term" value="F:ATP binding"/>
    <property type="evidence" value="ECO:0007669"/>
    <property type="project" value="UniProtKB-UniRule"/>
</dbReference>
<dbReference type="GO" id="GO:0004828">
    <property type="term" value="F:serine-tRNA ligase activity"/>
    <property type="evidence" value="ECO:0007669"/>
    <property type="project" value="UniProtKB-UniRule"/>
</dbReference>
<dbReference type="GO" id="GO:0016260">
    <property type="term" value="P:selenocysteine biosynthetic process"/>
    <property type="evidence" value="ECO:0007669"/>
    <property type="project" value="UniProtKB-UniRule"/>
</dbReference>
<dbReference type="GO" id="GO:0006434">
    <property type="term" value="P:seryl-tRNA aminoacylation"/>
    <property type="evidence" value="ECO:0007669"/>
    <property type="project" value="UniProtKB-UniRule"/>
</dbReference>
<dbReference type="CDD" id="cd00770">
    <property type="entry name" value="SerRS_core"/>
    <property type="match status" value="1"/>
</dbReference>
<dbReference type="Gene3D" id="3.30.930.10">
    <property type="entry name" value="Bira Bifunctional Protein, Domain 2"/>
    <property type="match status" value="1"/>
</dbReference>
<dbReference type="Gene3D" id="1.10.287.40">
    <property type="entry name" value="Serine-tRNA synthetase, tRNA binding domain"/>
    <property type="match status" value="1"/>
</dbReference>
<dbReference type="HAMAP" id="MF_00176">
    <property type="entry name" value="Ser_tRNA_synth_type1"/>
    <property type="match status" value="1"/>
</dbReference>
<dbReference type="InterPro" id="IPR002314">
    <property type="entry name" value="aa-tRNA-synt_IIb"/>
</dbReference>
<dbReference type="InterPro" id="IPR006195">
    <property type="entry name" value="aa-tRNA-synth_II"/>
</dbReference>
<dbReference type="InterPro" id="IPR045864">
    <property type="entry name" value="aa-tRNA-synth_II/BPL/LPL"/>
</dbReference>
<dbReference type="InterPro" id="IPR002317">
    <property type="entry name" value="Ser-tRNA-ligase_type_1"/>
</dbReference>
<dbReference type="InterPro" id="IPR015866">
    <property type="entry name" value="Ser-tRNA-synth_1_N"/>
</dbReference>
<dbReference type="InterPro" id="IPR042103">
    <property type="entry name" value="SerRS_1_N_sf"/>
</dbReference>
<dbReference type="InterPro" id="IPR033729">
    <property type="entry name" value="SerRS_core"/>
</dbReference>
<dbReference type="InterPro" id="IPR010978">
    <property type="entry name" value="tRNA-bd_arm"/>
</dbReference>
<dbReference type="NCBIfam" id="TIGR00414">
    <property type="entry name" value="serS"/>
    <property type="match status" value="1"/>
</dbReference>
<dbReference type="PANTHER" id="PTHR43697:SF1">
    <property type="entry name" value="SERINE--TRNA LIGASE"/>
    <property type="match status" value="1"/>
</dbReference>
<dbReference type="PANTHER" id="PTHR43697">
    <property type="entry name" value="SERYL-TRNA SYNTHETASE"/>
    <property type="match status" value="1"/>
</dbReference>
<dbReference type="Pfam" id="PF02403">
    <property type="entry name" value="Seryl_tRNA_N"/>
    <property type="match status" value="1"/>
</dbReference>
<dbReference type="Pfam" id="PF00587">
    <property type="entry name" value="tRNA-synt_2b"/>
    <property type="match status" value="1"/>
</dbReference>
<dbReference type="PIRSF" id="PIRSF001529">
    <property type="entry name" value="Ser-tRNA-synth_IIa"/>
    <property type="match status" value="1"/>
</dbReference>
<dbReference type="PRINTS" id="PR00981">
    <property type="entry name" value="TRNASYNTHSER"/>
</dbReference>
<dbReference type="SUPFAM" id="SSF55681">
    <property type="entry name" value="Class II aaRS and biotin synthetases"/>
    <property type="match status" value="1"/>
</dbReference>
<dbReference type="SUPFAM" id="SSF46589">
    <property type="entry name" value="tRNA-binding arm"/>
    <property type="match status" value="1"/>
</dbReference>
<dbReference type="PROSITE" id="PS50862">
    <property type="entry name" value="AA_TRNA_LIGASE_II"/>
    <property type="match status" value="1"/>
</dbReference>
<keyword id="KW-0030">Aminoacyl-tRNA synthetase</keyword>
<keyword id="KW-0067">ATP-binding</keyword>
<keyword id="KW-0963">Cytoplasm</keyword>
<keyword id="KW-0436">Ligase</keyword>
<keyword id="KW-0547">Nucleotide-binding</keyword>
<keyword id="KW-0648">Protein biosynthesis</keyword>
<keyword id="KW-1185">Reference proteome</keyword>
<evidence type="ECO:0000255" key="1">
    <source>
        <dbReference type="HAMAP-Rule" id="MF_00176"/>
    </source>
</evidence>
<evidence type="ECO:0000256" key="2">
    <source>
        <dbReference type="SAM" id="MobiDB-lite"/>
    </source>
</evidence>
<accession>A1B4S2</accession>
<name>SYS_PARDP</name>
<reference key="1">
    <citation type="submission" date="2006-12" db="EMBL/GenBank/DDBJ databases">
        <title>Complete sequence of chromosome 1 of Paracoccus denitrificans PD1222.</title>
        <authorList>
            <person name="Copeland A."/>
            <person name="Lucas S."/>
            <person name="Lapidus A."/>
            <person name="Barry K."/>
            <person name="Detter J.C."/>
            <person name="Glavina del Rio T."/>
            <person name="Hammon N."/>
            <person name="Israni S."/>
            <person name="Dalin E."/>
            <person name="Tice H."/>
            <person name="Pitluck S."/>
            <person name="Munk A.C."/>
            <person name="Brettin T."/>
            <person name="Bruce D."/>
            <person name="Han C."/>
            <person name="Tapia R."/>
            <person name="Gilna P."/>
            <person name="Schmutz J."/>
            <person name="Larimer F."/>
            <person name="Land M."/>
            <person name="Hauser L."/>
            <person name="Kyrpides N."/>
            <person name="Lykidis A."/>
            <person name="Spiro S."/>
            <person name="Richardson D.J."/>
            <person name="Moir J.W.B."/>
            <person name="Ferguson S.J."/>
            <person name="van Spanning R.J.M."/>
            <person name="Richardson P."/>
        </authorList>
    </citation>
    <scope>NUCLEOTIDE SEQUENCE [LARGE SCALE GENOMIC DNA]</scope>
    <source>
        <strain>Pd 1222</strain>
    </source>
</reference>
<proteinExistence type="inferred from homology"/>
<protein>
    <recommendedName>
        <fullName evidence="1">Serine--tRNA ligase</fullName>
        <ecNumber evidence="1">6.1.1.11</ecNumber>
    </recommendedName>
    <alternativeName>
        <fullName evidence="1">Seryl-tRNA synthetase</fullName>
        <shortName evidence="1">SerRS</shortName>
    </alternativeName>
    <alternativeName>
        <fullName evidence="1">Seryl-tRNA(Ser/Sec) synthetase</fullName>
    </alternativeName>
</protein>
<sequence length="430" mass="46960">MHDIRAIRENPAAFDAALALRNLPPVSPEILSLDADRRSRIAAAEAAQAEQNKASKEAGAAKGRGDEAEFQRLRALVTAKKDETARLQAEATALDAKLRELLLAVPNLPLDGVPPGKDEDDNVEIRRWGEPRAFDFAPREHFEIEGVRPGMDFETAAKLSGSRFVVLKGGVARVHRALAQFMLDLHTEEHGLAETWAPVLVLSEMMEGTGQLPKFGEDSYQTREGWWLIPTSEVTLTNTVNGDLVDHASLPRRMVAHSQCFRSEAGSAGRDTSGMLRQHQFEKVEMVSITDAESGVEEHARMTRCAEAVLERLGLPYRTIVLCGGDMGFGARITHDLEVWLPGQGKYREISSVSYCGDFQARRMNARYRPAGGGKPEFVHTLNGSGLAVGRTLIAVLENGQQADGSVKLPEVLHPYLGGRTRLGADGVLA</sequence>